<protein>
    <recommendedName>
        <fullName evidence="1">UPF0346 protein LBUL_1194</fullName>
    </recommendedName>
</protein>
<organism>
    <name type="scientific">Lactobacillus delbrueckii subsp. bulgaricus (strain ATCC BAA-365 / Lb-18)</name>
    <dbReference type="NCBI Taxonomy" id="321956"/>
    <lineage>
        <taxon>Bacteria</taxon>
        <taxon>Bacillati</taxon>
        <taxon>Bacillota</taxon>
        <taxon>Bacilli</taxon>
        <taxon>Lactobacillales</taxon>
        <taxon>Lactobacillaceae</taxon>
        <taxon>Lactobacillus</taxon>
    </lineage>
</organism>
<reference key="1">
    <citation type="journal article" date="2006" name="Proc. Natl. Acad. Sci. U.S.A.">
        <title>Comparative genomics of the lactic acid bacteria.</title>
        <authorList>
            <person name="Makarova K.S."/>
            <person name="Slesarev A."/>
            <person name="Wolf Y.I."/>
            <person name="Sorokin A."/>
            <person name="Mirkin B."/>
            <person name="Koonin E.V."/>
            <person name="Pavlov A."/>
            <person name="Pavlova N."/>
            <person name="Karamychev V."/>
            <person name="Polouchine N."/>
            <person name="Shakhova V."/>
            <person name="Grigoriev I."/>
            <person name="Lou Y."/>
            <person name="Rohksar D."/>
            <person name="Lucas S."/>
            <person name="Huang K."/>
            <person name="Goodstein D.M."/>
            <person name="Hawkins T."/>
            <person name="Plengvidhya V."/>
            <person name="Welker D."/>
            <person name="Hughes J."/>
            <person name="Goh Y."/>
            <person name="Benson A."/>
            <person name="Baldwin K."/>
            <person name="Lee J.-H."/>
            <person name="Diaz-Muniz I."/>
            <person name="Dosti B."/>
            <person name="Smeianov V."/>
            <person name="Wechter W."/>
            <person name="Barabote R."/>
            <person name="Lorca G."/>
            <person name="Altermann E."/>
            <person name="Barrangou R."/>
            <person name="Ganesan B."/>
            <person name="Xie Y."/>
            <person name="Rawsthorne H."/>
            <person name="Tamir D."/>
            <person name="Parker C."/>
            <person name="Breidt F."/>
            <person name="Broadbent J.R."/>
            <person name="Hutkins R."/>
            <person name="O'Sullivan D."/>
            <person name="Steele J."/>
            <person name="Unlu G."/>
            <person name="Saier M.H. Jr."/>
            <person name="Klaenhammer T."/>
            <person name="Richardson P."/>
            <person name="Kozyavkin S."/>
            <person name="Weimer B.C."/>
            <person name="Mills D.A."/>
        </authorList>
    </citation>
    <scope>NUCLEOTIDE SEQUENCE [LARGE SCALE GENOMIC DNA]</scope>
    <source>
        <strain>ATCC BAA-365 / Lb-18</strain>
    </source>
</reference>
<name>Y1194_LACDB</name>
<gene>
    <name type="ordered locus">LBUL_1194</name>
</gene>
<comment type="similarity">
    <text evidence="1">Belongs to the UPF0346 family.</text>
</comment>
<evidence type="ECO:0000255" key="1">
    <source>
        <dbReference type="HAMAP-Rule" id="MF_01538"/>
    </source>
</evidence>
<dbReference type="EMBL" id="CP000412">
    <property type="protein sequence ID" value="ABJ58725.1"/>
    <property type="molecule type" value="Genomic_DNA"/>
</dbReference>
<dbReference type="RefSeq" id="WP_002880201.1">
    <property type="nucleotide sequence ID" value="NC_008529.1"/>
</dbReference>
<dbReference type="SMR" id="Q049Z7"/>
<dbReference type="KEGG" id="lbu:LBUL_1194"/>
<dbReference type="HOGENOM" id="CLU_177534_1_0_9"/>
<dbReference type="BioCyc" id="LDEL321956:LBUL_RS05575-MONOMER"/>
<dbReference type="Gene3D" id="1.10.150.260">
    <property type="entry name" value="YozE SAM-like"/>
    <property type="match status" value="1"/>
</dbReference>
<dbReference type="HAMAP" id="MF_01538">
    <property type="entry name" value="UPF0346"/>
    <property type="match status" value="1"/>
</dbReference>
<dbReference type="InterPro" id="IPR010673">
    <property type="entry name" value="UPF0346"/>
</dbReference>
<dbReference type="InterPro" id="IPR023089">
    <property type="entry name" value="YozE_SAM-like"/>
</dbReference>
<dbReference type="InterPro" id="IPR036806">
    <property type="entry name" value="YozE_SAM-like_sf"/>
</dbReference>
<dbReference type="NCBIfam" id="NF010193">
    <property type="entry name" value="PRK13672.1"/>
    <property type="match status" value="1"/>
</dbReference>
<dbReference type="Pfam" id="PF06855">
    <property type="entry name" value="YozE_SAM_like"/>
    <property type="match status" value="1"/>
</dbReference>
<dbReference type="PIRSF" id="PIRSF037262">
    <property type="entry name" value="UCP037262"/>
    <property type="match status" value="1"/>
</dbReference>
<dbReference type="SUPFAM" id="SSF140652">
    <property type="entry name" value="YozE-like"/>
    <property type="match status" value="1"/>
</dbReference>
<sequence>MAYRQSFYQFLMTLRDPDSNGDLAQFANNAQFDSTFPRQEQDRTRLSEYLEENAAYLPSMTIFDDAYQAYEEKMQY</sequence>
<accession>Q049Z7</accession>
<proteinExistence type="inferred from homology"/>
<feature type="chain" id="PRO_0000298741" description="UPF0346 protein LBUL_1194">
    <location>
        <begin position="1"/>
        <end position="76"/>
    </location>
</feature>